<protein>
    <recommendedName>
        <fullName evidence="2">NADH-quinone oxidoreductase subunit B</fullName>
        <ecNumber evidence="2">7.1.1.-</ecNumber>
    </recommendedName>
    <alternativeName>
        <fullName evidence="2">NADH dehydrogenase I subunit B</fullName>
    </alternativeName>
    <alternativeName>
        <fullName evidence="2">NDH-1 subunit B</fullName>
    </alternativeName>
</protein>
<dbReference type="EC" id="7.1.1.-" evidence="2"/>
<dbReference type="EMBL" id="CP000237">
    <property type="protein sequence ID" value="ABD45773.1"/>
    <property type="molecule type" value="Genomic_DNA"/>
</dbReference>
<dbReference type="RefSeq" id="WP_011451823.1">
    <property type="nucleotide sequence ID" value="NC_007798.1"/>
</dbReference>
<dbReference type="SMR" id="Q2GDX9"/>
<dbReference type="STRING" id="222891.NSE_0431"/>
<dbReference type="KEGG" id="nse:NSE_0431"/>
<dbReference type="eggNOG" id="COG0377">
    <property type="taxonomic scope" value="Bacteria"/>
</dbReference>
<dbReference type="HOGENOM" id="CLU_055737_7_0_5"/>
<dbReference type="OrthoDB" id="9786737at2"/>
<dbReference type="Proteomes" id="UP000001942">
    <property type="component" value="Chromosome"/>
</dbReference>
<dbReference type="GO" id="GO:0005886">
    <property type="term" value="C:plasma membrane"/>
    <property type="evidence" value="ECO:0007669"/>
    <property type="project" value="UniProtKB-SubCell"/>
</dbReference>
<dbReference type="GO" id="GO:0045271">
    <property type="term" value="C:respiratory chain complex I"/>
    <property type="evidence" value="ECO:0007669"/>
    <property type="project" value="TreeGrafter"/>
</dbReference>
<dbReference type="GO" id="GO:0051539">
    <property type="term" value="F:4 iron, 4 sulfur cluster binding"/>
    <property type="evidence" value="ECO:0007669"/>
    <property type="project" value="UniProtKB-KW"/>
</dbReference>
<dbReference type="GO" id="GO:0005506">
    <property type="term" value="F:iron ion binding"/>
    <property type="evidence" value="ECO:0007669"/>
    <property type="project" value="UniProtKB-UniRule"/>
</dbReference>
<dbReference type="GO" id="GO:0008137">
    <property type="term" value="F:NADH dehydrogenase (ubiquinone) activity"/>
    <property type="evidence" value="ECO:0007669"/>
    <property type="project" value="InterPro"/>
</dbReference>
<dbReference type="GO" id="GO:0050136">
    <property type="term" value="F:NADH:ubiquinone reductase (non-electrogenic) activity"/>
    <property type="evidence" value="ECO:0007669"/>
    <property type="project" value="UniProtKB-UniRule"/>
</dbReference>
<dbReference type="GO" id="GO:0048038">
    <property type="term" value="F:quinone binding"/>
    <property type="evidence" value="ECO:0007669"/>
    <property type="project" value="UniProtKB-KW"/>
</dbReference>
<dbReference type="GO" id="GO:0009060">
    <property type="term" value="P:aerobic respiration"/>
    <property type="evidence" value="ECO:0007669"/>
    <property type="project" value="TreeGrafter"/>
</dbReference>
<dbReference type="GO" id="GO:0015990">
    <property type="term" value="P:electron transport coupled proton transport"/>
    <property type="evidence" value="ECO:0007669"/>
    <property type="project" value="TreeGrafter"/>
</dbReference>
<dbReference type="FunFam" id="3.40.50.12280:FF:000001">
    <property type="entry name" value="NADH-quinone oxidoreductase subunit B 2"/>
    <property type="match status" value="1"/>
</dbReference>
<dbReference type="Gene3D" id="3.40.50.12280">
    <property type="match status" value="1"/>
</dbReference>
<dbReference type="HAMAP" id="MF_01356">
    <property type="entry name" value="NDH1_NuoB"/>
    <property type="match status" value="1"/>
</dbReference>
<dbReference type="InterPro" id="IPR006137">
    <property type="entry name" value="NADH_UbQ_OxRdtase-like_20kDa"/>
</dbReference>
<dbReference type="InterPro" id="IPR006138">
    <property type="entry name" value="NADH_UQ_OxRdtase_20Kd_su"/>
</dbReference>
<dbReference type="NCBIfam" id="TIGR01957">
    <property type="entry name" value="nuoB_fam"/>
    <property type="match status" value="1"/>
</dbReference>
<dbReference type="NCBIfam" id="NF005012">
    <property type="entry name" value="PRK06411.1"/>
    <property type="match status" value="1"/>
</dbReference>
<dbReference type="PANTHER" id="PTHR11995">
    <property type="entry name" value="NADH DEHYDROGENASE"/>
    <property type="match status" value="1"/>
</dbReference>
<dbReference type="PANTHER" id="PTHR11995:SF14">
    <property type="entry name" value="NADH DEHYDROGENASE [UBIQUINONE] IRON-SULFUR PROTEIN 7, MITOCHONDRIAL"/>
    <property type="match status" value="1"/>
</dbReference>
<dbReference type="Pfam" id="PF01058">
    <property type="entry name" value="Oxidored_q6"/>
    <property type="match status" value="1"/>
</dbReference>
<dbReference type="SUPFAM" id="SSF56770">
    <property type="entry name" value="HydA/Nqo6-like"/>
    <property type="match status" value="1"/>
</dbReference>
<dbReference type="PROSITE" id="PS01150">
    <property type="entry name" value="COMPLEX1_20K"/>
    <property type="match status" value="1"/>
</dbReference>
<accession>Q2GDX9</accession>
<sequence length="167" mass="18617">MGNGFSDVNALSNVSSDGYLVAKLDDLINWARSGSLWPMTFGLACCAVEMMHFTASRYDMDRFGMIFRPSPRQSDVMIVAGTLTNKMAPALRRVYDQMAEPKYVISMGSCANGGGYYHYSYSVVRGCDRIVPVDVYVPGCPPTAEALLYGVLCLQKKINRQRNFIRR</sequence>
<organism>
    <name type="scientific">Neorickettsia sennetsu (strain ATCC VR-367 / Miyayama)</name>
    <name type="common">Ehrlichia sennetsu</name>
    <dbReference type="NCBI Taxonomy" id="222891"/>
    <lineage>
        <taxon>Bacteria</taxon>
        <taxon>Pseudomonadati</taxon>
        <taxon>Pseudomonadota</taxon>
        <taxon>Alphaproteobacteria</taxon>
        <taxon>Rickettsiales</taxon>
        <taxon>Anaplasmataceae</taxon>
        <taxon>Neorickettsia</taxon>
    </lineage>
</organism>
<proteinExistence type="inferred from homology"/>
<evidence type="ECO:0000250" key="1"/>
<evidence type="ECO:0000255" key="2">
    <source>
        <dbReference type="HAMAP-Rule" id="MF_01356"/>
    </source>
</evidence>
<keyword id="KW-0004">4Fe-4S</keyword>
<keyword id="KW-0997">Cell inner membrane</keyword>
<keyword id="KW-1003">Cell membrane</keyword>
<keyword id="KW-0408">Iron</keyword>
<keyword id="KW-0411">Iron-sulfur</keyword>
<keyword id="KW-0472">Membrane</keyword>
<keyword id="KW-0479">Metal-binding</keyword>
<keyword id="KW-0520">NAD</keyword>
<keyword id="KW-0874">Quinone</keyword>
<keyword id="KW-1278">Translocase</keyword>
<keyword id="KW-0813">Transport</keyword>
<keyword id="KW-0830">Ubiquinone</keyword>
<reference key="1">
    <citation type="journal article" date="2006" name="PLoS Genet.">
        <title>Comparative genomics of emerging human ehrlichiosis agents.</title>
        <authorList>
            <person name="Dunning Hotopp J.C."/>
            <person name="Lin M."/>
            <person name="Madupu R."/>
            <person name="Crabtree J."/>
            <person name="Angiuoli S.V."/>
            <person name="Eisen J.A."/>
            <person name="Seshadri R."/>
            <person name="Ren Q."/>
            <person name="Wu M."/>
            <person name="Utterback T.R."/>
            <person name="Smith S."/>
            <person name="Lewis M."/>
            <person name="Khouri H."/>
            <person name="Zhang C."/>
            <person name="Niu H."/>
            <person name="Lin Q."/>
            <person name="Ohashi N."/>
            <person name="Zhi N."/>
            <person name="Nelson W.C."/>
            <person name="Brinkac L.M."/>
            <person name="Dodson R.J."/>
            <person name="Rosovitz M.J."/>
            <person name="Sundaram J.P."/>
            <person name="Daugherty S.C."/>
            <person name="Davidsen T."/>
            <person name="Durkin A.S."/>
            <person name="Gwinn M.L."/>
            <person name="Haft D.H."/>
            <person name="Selengut J.D."/>
            <person name="Sullivan S.A."/>
            <person name="Zafar N."/>
            <person name="Zhou L."/>
            <person name="Benahmed F."/>
            <person name="Forberger H."/>
            <person name="Halpin R."/>
            <person name="Mulligan S."/>
            <person name="Robinson J."/>
            <person name="White O."/>
            <person name="Rikihisa Y."/>
            <person name="Tettelin H."/>
        </authorList>
    </citation>
    <scope>NUCLEOTIDE SEQUENCE [LARGE SCALE GENOMIC DNA]</scope>
    <source>
        <strain>ATCC VR-367 / Miyayama</strain>
    </source>
</reference>
<name>NUOB_NEOSM</name>
<gene>
    <name evidence="2" type="primary">nuoB</name>
    <name type="ordered locus">NSE_0431</name>
</gene>
<feature type="chain" id="PRO_0000358432" description="NADH-quinone oxidoreductase subunit B">
    <location>
        <begin position="1"/>
        <end position="167"/>
    </location>
</feature>
<feature type="binding site" evidence="2">
    <location>
        <position position="45"/>
    </location>
    <ligand>
        <name>[4Fe-4S] cluster</name>
        <dbReference type="ChEBI" id="CHEBI:49883"/>
    </ligand>
</feature>
<feature type="binding site" evidence="2">
    <location>
        <position position="46"/>
    </location>
    <ligand>
        <name>[4Fe-4S] cluster</name>
        <dbReference type="ChEBI" id="CHEBI:49883"/>
    </ligand>
</feature>
<feature type="binding site" evidence="2">
    <location>
        <position position="110"/>
    </location>
    <ligand>
        <name>[4Fe-4S] cluster</name>
        <dbReference type="ChEBI" id="CHEBI:49883"/>
    </ligand>
</feature>
<feature type="binding site" evidence="2">
    <location>
        <position position="140"/>
    </location>
    <ligand>
        <name>[4Fe-4S] cluster</name>
        <dbReference type="ChEBI" id="CHEBI:49883"/>
    </ligand>
</feature>
<comment type="function">
    <text evidence="1">NDH-1 shuttles electrons from NADH, via FMN and iron-sulfur (Fe-S) centers, to quinones in the respiratory chain. Couples the redox reaction to proton translocation (for every two electrons transferred, four hydrogen ions are translocated across the cytoplasmic membrane), and thus conserves the redox energy in a proton gradient (By similarity).</text>
</comment>
<comment type="catalytic activity">
    <reaction evidence="2">
        <text>a quinone + NADH + 5 H(+)(in) = a quinol + NAD(+) + 4 H(+)(out)</text>
        <dbReference type="Rhea" id="RHEA:57888"/>
        <dbReference type="ChEBI" id="CHEBI:15378"/>
        <dbReference type="ChEBI" id="CHEBI:24646"/>
        <dbReference type="ChEBI" id="CHEBI:57540"/>
        <dbReference type="ChEBI" id="CHEBI:57945"/>
        <dbReference type="ChEBI" id="CHEBI:132124"/>
    </reaction>
</comment>
<comment type="cofactor">
    <cofactor evidence="2">
        <name>[4Fe-4S] cluster</name>
        <dbReference type="ChEBI" id="CHEBI:49883"/>
    </cofactor>
    <text evidence="2">Binds 1 [4Fe-4S] cluster.</text>
</comment>
<comment type="subunit">
    <text evidence="2">NDH-1 is composed of 14 different subunits. Subunits NuoB, C, D, E, F, and G constitute the peripheral sector of the complex.</text>
</comment>
<comment type="subcellular location">
    <subcellularLocation>
        <location evidence="2">Cell inner membrane</location>
        <topology evidence="2">Peripheral membrane protein</topology>
        <orientation evidence="2">Cytoplasmic side</orientation>
    </subcellularLocation>
</comment>
<comment type="similarity">
    <text evidence="2">Belongs to the complex I 20 kDa subunit family.</text>
</comment>